<gene>
    <name type="ordered locus">Rv2629</name>
</gene>
<evidence type="ECO:0000255" key="1"/>
<evidence type="ECO:0000269" key="2">
    <source>
    </source>
</evidence>
<evidence type="ECO:0000269" key="3">
    <source>
    </source>
</evidence>
<evidence type="ECO:0000269" key="4">
    <source>
    </source>
</evidence>
<evidence type="ECO:0000269" key="5">
    <source>
    </source>
</evidence>
<evidence type="ECO:0000305" key="6">
    <source>
    </source>
</evidence>
<evidence type="ECO:0000305" key="7">
    <source>
    </source>
</evidence>
<proteinExistence type="evidence at protein level"/>
<feature type="chain" id="PRO_0000392936" description="Uncharacterized protein Rv2629">
    <location>
        <begin position="1"/>
        <end position="374"/>
    </location>
</feature>
<feature type="coiled-coil region" evidence="1">
    <location>
        <begin position="39"/>
        <end position="66"/>
    </location>
</feature>
<feature type="sequence variant" description="Common variant in the Beijing-W clade/SCG-2 phylogenetic group.">
    <original>D</original>
    <variation>A</variation>
    <location>
        <position position="64"/>
    </location>
</feature>
<comment type="induction">
    <text evidence="2 3 4 5">Induced by anaerobisis (at protein level). A member of the dormancy regulon. Induced in response to reduced oxygen tension (hypoxia), low levels of nitric oxide (NO) and carbon monoxide (CO). It is hoped that this regulon will give insight into the latent, or dormant phase of infection.</text>
</comment>
<comment type="caution">
    <text evidence="6 7">A fairly frequent variant (Ala-64) was originally (PubMed:17970586) suggested to be responsible for some cases of rifampicin resistance. This has since been shown not to be true (PubMed:18550732), although it is a good marker for the Beijing-W clade/SCG-2 phylogenetic group.</text>
</comment>
<reference key="1">
    <citation type="journal article" date="1998" name="Nature">
        <title>Deciphering the biology of Mycobacterium tuberculosis from the complete genome sequence.</title>
        <authorList>
            <person name="Cole S.T."/>
            <person name="Brosch R."/>
            <person name="Parkhill J."/>
            <person name="Garnier T."/>
            <person name="Churcher C.M."/>
            <person name="Harris D.E."/>
            <person name="Gordon S.V."/>
            <person name="Eiglmeier K."/>
            <person name="Gas S."/>
            <person name="Barry C.E. III"/>
            <person name="Tekaia F."/>
            <person name="Badcock K."/>
            <person name="Basham D."/>
            <person name="Brown D."/>
            <person name="Chillingworth T."/>
            <person name="Connor R."/>
            <person name="Davies R.M."/>
            <person name="Devlin K."/>
            <person name="Feltwell T."/>
            <person name="Gentles S."/>
            <person name="Hamlin N."/>
            <person name="Holroyd S."/>
            <person name="Hornsby T."/>
            <person name="Jagels K."/>
            <person name="Krogh A."/>
            <person name="McLean J."/>
            <person name="Moule S."/>
            <person name="Murphy L.D."/>
            <person name="Oliver S."/>
            <person name="Osborne J."/>
            <person name="Quail M.A."/>
            <person name="Rajandream M.A."/>
            <person name="Rogers J."/>
            <person name="Rutter S."/>
            <person name="Seeger K."/>
            <person name="Skelton S."/>
            <person name="Squares S."/>
            <person name="Squares R."/>
            <person name="Sulston J.E."/>
            <person name="Taylor K."/>
            <person name="Whitehead S."/>
            <person name="Barrell B.G."/>
        </authorList>
    </citation>
    <scope>NUCLEOTIDE SEQUENCE [LARGE SCALE GENOMIC DNA]</scope>
    <source>
        <strain>ATCC 25618 / H37Rv</strain>
    </source>
</reference>
<reference key="2">
    <citation type="journal article" date="2007" name="J. Proteome Res.">
        <title>A newly identified 191A/C mutation in the Rv2629 gene that was significantly associated with rifampin resistance in Mycobacterium tuberculosis.</title>
        <authorList>
            <person name="Wang Q."/>
            <person name="Yue J."/>
            <person name="Zhang L."/>
            <person name="Xu Y."/>
            <person name="Chen J."/>
            <person name="Zhang M."/>
            <person name="Zhu B."/>
            <person name="Wang H."/>
            <person name="Wang H."/>
        </authorList>
    </citation>
    <scope>PROTEIN SEQUENCE OF 187-203 AND 351-362</scope>
    <scope>SUGGESTED ANTIBIOTIC RESISTANCE</scope>
</reference>
<reference key="3">
    <citation type="journal article" date="2001" name="Proc. Natl. Acad. Sci. U.S.A.">
        <title>Regulation of the Mycobacterium tuberculosis hypoxic response gene encoding alpha -crystallin.</title>
        <authorList>
            <person name="Sherman D.R."/>
            <person name="Voskuil M."/>
            <person name="Schnappinger D."/>
            <person name="Liao R."/>
            <person name="Harrell M.I."/>
            <person name="Schoolnik G.K."/>
        </authorList>
    </citation>
    <scope>INDUCTION BY HYPOXIA</scope>
    <source>
        <strain>ATCC 25618 / H37Rv</strain>
    </source>
</reference>
<reference key="4">
    <citation type="journal article" date="2003" name="J. Exp. Med.">
        <title>Inhibition of respiration by nitric oxide induces a Mycobacterium tuberculosis dormancy program.</title>
        <authorList>
            <person name="Voskuil M.I."/>
            <person name="Schnappinger D."/>
            <person name="Visconti K.C."/>
            <person name="Harrell M.I."/>
            <person name="Dolganov G.M."/>
            <person name="Sherman D.R."/>
            <person name="Schoolnik G.K."/>
        </authorList>
    </citation>
    <scope>INDUCTION BY NITRIC OXIDE (NO) AND BY HYPOXIA</scope>
    <scope>DORMANCY REGULON</scope>
    <source>
        <strain>ATCC 25618 / H37Rv</strain>
    </source>
</reference>
<reference key="5">
    <citation type="journal article" date="2004" name="Microbiology">
        <title>Comparative proteome analysis of Mycobacterium tuberculosis grown under aerobic and anaerobic conditions.</title>
        <authorList>
            <person name="Starck J."/>
            <person name="Kallenius G."/>
            <person name="Marklund B.I."/>
            <person name="Andersson D.I."/>
            <person name="Akerlund T."/>
        </authorList>
    </citation>
    <scope>INDUCTION BY ANAEROBISIS</scope>
    <scope>IDENTIFICATION BY MASS SPECTROMETRY</scope>
    <source>
        <strain>S-02293 Harlingen</strain>
    </source>
</reference>
<reference key="6">
    <citation type="journal article" date="2008" name="J. Biol. Chem.">
        <title>Heme oxygenase-1-derived carbon monoxide induces the Mycobacterium tuberculosis dormancy regulon.</title>
        <authorList>
            <person name="Kumar A."/>
            <person name="Deshane J.S."/>
            <person name="Crossman D.K."/>
            <person name="Bolisetty S."/>
            <person name="Yan B.S."/>
            <person name="Kramnik I."/>
            <person name="Agarwal A."/>
            <person name="Steyn A.J."/>
        </authorList>
    </citation>
    <scope>INDUCTION BY CARBON MONOXIDE (CO)</scope>
    <scope>DORMANCY REGULON</scope>
    <source>
        <strain>ATCC 25618 / H37Rv</strain>
    </source>
</reference>
<reference key="7">
    <citation type="journal article" date="2008" name="J. Clin. Microbiol.">
        <title>Rifampin resistance, Beijing-W clade-single nucleotide polymorphism cluster group 2 phylogeny, and the Rv2629 191-C allele in Mycobacterium tuberculosis strains.</title>
        <authorList>
            <person name="Chakravorty S."/>
            <person name="Aladegbami B."/>
            <person name="Motiwala A.S."/>
            <person name="Dai Y."/>
            <person name="Safi H."/>
            <person name="Brimacombe M."/>
            <person name="Helb D."/>
            <person name="Alland D."/>
        </authorList>
    </citation>
    <scope>NOT RESPONSIBLE FOR ANTIBIOTIC RESISTANCE</scope>
</reference>
<reference key="8">
    <citation type="journal article" date="2011" name="Mol. Cell. Proteomics">
        <title>Proteogenomic analysis of Mycobacterium tuberculosis by high resolution mass spectrometry.</title>
        <authorList>
            <person name="Kelkar D.S."/>
            <person name="Kumar D."/>
            <person name="Kumar P."/>
            <person name="Balakrishnan L."/>
            <person name="Muthusamy B."/>
            <person name="Yadav A.K."/>
            <person name="Shrivastava P."/>
            <person name="Marimuthu A."/>
            <person name="Anand S."/>
            <person name="Sundaram H."/>
            <person name="Kingsbury R."/>
            <person name="Harsha H.C."/>
            <person name="Nair B."/>
            <person name="Prasad T.S."/>
            <person name="Chauhan D.S."/>
            <person name="Katoch K."/>
            <person name="Katoch V.M."/>
            <person name="Kumar P."/>
            <person name="Chaerkady R."/>
            <person name="Ramachandran S."/>
            <person name="Dash D."/>
            <person name="Pandey A."/>
        </authorList>
    </citation>
    <scope>IDENTIFICATION BY MASS SPECTROMETRY [LARGE SCALE ANALYSIS]</scope>
    <source>
        <strain>ATCC 25618 / H37Rv</strain>
    </source>
</reference>
<sequence length="374" mass="40840">MRSERLRWLVAAEGPFASVYFDDSHDTLDAVERREATWRDVRKHLESRDAKQELIDSLEEAVRDSRPAVGQRGRALIATGEQVLVNEHLIGPPPATVIRLSDYPYVVPLIDLEMRRPTYVFAAVDHTGADVKLYQGATISSTKIDGVGYPVHKPVTAGWNGYGDFQHTTEEAIRMNCRAVADHLTRLVDAADPEVVFVSGEVRSRTDLLSTLPQRVAVRVSQLHAGPRKSALDEEEIWDLTSAEFTRRRYAEITNVAQQFEAEIGRGSGLAAQGLAEVCAALRDGDVDTLIVGELGEATVVTGKARTTVARDADMLSELGEPVDRVARADEALPFAAIAVGAALVRDDNRIAPLDGVGALLRYAATNRLGSHRS</sequence>
<accession>P9WL63</accession>
<accession>L0TD40</accession>
<accession>O06183</accession>
<accession>Q7D6V1</accession>
<organism>
    <name type="scientific">Mycobacterium tuberculosis (strain ATCC 25618 / H37Rv)</name>
    <dbReference type="NCBI Taxonomy" id="83332"/>
    <lineage>
        <taxon>Bacteria</taxon>
        <taxon>Bacillati</taxon>
        <taxon>Actinomycetota</taxon>
        <taxon>Actinomycetes</taxon>
        <taxon>Mycobacteriales</taxon>
        <taxon>Mycobacteriaceae</taxon>
        <taxon>Mycobacterium</taxon>
        <taxon>Mycobacterium tuberculosis complex</taxon>
    </lineage>
</organism>
<dbReference type="EMBL" id="AL123456">
    <property type="protein sequence ID" value="CCP45427.1"/>
    <property type="molecule type" value="Genomic_DNA"/>
</dbReference>
<dbReference type="PIR" id="D70573">
    <property type="entry name" value="D70573"/>
</dbReference>
<dbReference type="RefSeq" id="NP_217145.1">
    <property type="nucleotide sequence ID" value="NC_000962.3"/>
</dbReference>
<dbReference type="RefSeq" id="WP_003413610.1">
    <property type="nucleotide sequence ID" value="NZ_NVQJ01000075.1"/>
</dbReference>
<dbReference type="PDB" id="8V9K">
    <property type="method" value="EM"/>
    <property type="resolution" value="3.10 A"/>
    <property type="chains" value="z=1-374"/>
</dbReference>
<dbReference type="PDBsum" id="8V9K"/>
<dbReference type="EMDB" id="EMD-43075"/>
<dbReference type="SMR" id="P9WL63"/>
<dbReference type="STRING" id="83332.Rv2629"/>
<dbReference type="PaxDb" id="83332-Rv2629"/>
<dbReference type="DNASU" id="888588"/>
<dbReference type="GeneID" id="888588"/>
<dbReference type="KEGG" id="mtu:Rv2629"/>
<dbReference type="KEGG" id="mtv:RVBD_2629"/>
<dbReference type="TubercuList" id="Rv2629"/>
<dbReference type="eggNOG" id="COG1503">
    <property type="taxonomic scope" value="Bacteria"/>
</dbReference>
<dbReference type="InParanoid" id="P9WL63"/>
<dbReference type="OrthoDB" id="5179393at2"/>
<dbReference type="PhylomeDB" id="P9WL63"/>
<dbReference type="Proteomes" id="UP000001584">
    <property type="component" value="Chromosome"/>
</dbReference>
<dbReference type="GO" id="GO:0005829">
    <property type="term" value="C:cytosol"/>
    <property type="evidence" value="ECO:0007005"/>
    <property type="project" value="MTBBASE"/>
</dbReference>
<dbReference type="GO" id="GO:0009274">
    <property type="term" value="C:peptidoglycan-based cell wall"/>
    <property type="evidence" value="ECO:0007005"/>
    <property type="project" value="MTBBASE"/>
</dbReference>
<dbReference type="GO" id="GO:0005886">
    <property type="term" value="C:plasma membrane"/>
    <property type="evidence" value="ECO:0007005"/>
    <property type="project" value="MTBBASE"/>
</dbReference>
<dbReference type="GO" id="GO:0001666">
    <property type="term" value="P:response to hypoxia"/>
    <property type="evidence" value="ECO:0000270"/>
    <property type="project" value="MTBBASE"/>
</dbReference>
<dbReference type="Gene3D" id="3.30.1330.30">
    <property type="match status" value="1"/>
</dbReference>
<dbReference type="InterPro" id="IPR040701">
    <property type="entry name" value="Bact_RF_family2"/>
</dbReference>
<dbReference type="InterPro" id="IPR029064">
    <property type="entry name" value="Ribosomal_eL30-like_sf"/>
</dbReference>
<dbReference type="Pfam" id="PF18844">
    <property type="entry name" value="baeRF_family2"/>
    <property type="match status" value="1"/>
</dbReference>
<dbReference type="SUPFAM" id="SSF55315">
    <property type="entry name" value="L30e-like"/>
    <property type="match status" value="1"/>
</dbReference>
<keyword id="KW-0002">3D-structure</keyword>
<keyword id="KW-0175">Coiled coil</keyword>
<keyword id="KW-0903">Direct protein sequencing</keyword>
<keyword id="KW-1185">Reference proteome</keyword>
<name>Y2629_MYCTU</name>
<protein>
    <recommendedName>
        <fullName>Uncharacterized protein Rv2629</fullName>
    </recommendedName>
</protein>